<feature type="chain" id="PRO_1000147379" description="Anti-sigma F factor">
    <location>
        <begin position="1"/>
        <end position="146"/>
    </location>
</feature>
<sequence length="146" mass="16246">MRNEMNLQFSALSQNESFARVTVAAFIAQLDPTMEELTEIKTVVSEAVTNAIIHGYEGNAEGVVYISVILEEAMVKLTIRDEGIGIFNLDEARQPLFTTKPELERSGMGFTIMENFMDEVEVISNESFGTTIHLTKYLSNSNALCN</sequence>
<accession>C3P7L0</accession>
<evidence type="ECO:0000255" key="1">
    <source>
        <dbReference type="HAMAP-Rule" id="MF_00637"/>
    </source>
</evidence>
<protein>
    <recommendedName>
        <fullName evidence="1">Anti-sigma F factor</fullName>
        <ecNumber evidence="1">2.7.11.1</ecNumber>
    </recommendedName>
    <alternativeName>
        <fullName evidence="1">Stage II sporulation protein AB</fullName>
    </alternativeName>
</protein>
<keyword id="KW-0067">ATP-binding</keyword>
<keyword id="KW-0418">Kinase</keyword>
<keyword id="KW-0547">Nucleotide-binding</keyword>
<keyword id="KW-0723">Serine/threonine-protein kinase</keyword>
<keyword id="KW-0749">Sporulation</keyword>
<keyword id="KW-0808">Transferase</keyword>
<proteinExistence type="inferred from homology"/>
<gene>
    <name evidence="1" type="primary">spoIIAB</name>
    <name type="ordered locus">BAA_4317</name>
</gene>
<organism>
    <name type="scientific">Bacillus anthracis (strain A0248)</name>
    <dbReference type="NCBI Taxonomy" id="592021"/>
    <lineage>
        <taxon>Bacteria</taxon>
        <taxon>Bacillati</taxon>
        <taxon>Bacillota</taxon>
        <taxon>Bacilli</taxon>
        <taxon>Bacillales</taxon>
        <taxon>Bacillaceae</taxon>
        <taxon>Bacillus</taxon>
        <taxon>Bacillus cereus group</taxon>
    </lineage>
</organism>
<dbReference type="EC" id="2.7.11.1" evidence="1"/>
<dbReference type="EMBL" id="CP001598">
    <property type="protein sequence ID" value="ACQ50868.1"/>
    <property type="molecule type" value="Genomic_DNA"/>
</dbReference>
<dbReference type="RefSeq" id="WP_001243400.1">
    <property type="nucleotide sequence ID" value="NC_012659.1"/>
</dbReference>
<dbReference type="SMR" id="C3P7L0"/>
<dbReference type="GeneID" id="92883500"/>
<dbReference type="KEGG" id="bai:BAA_4317"/>
<dbReference type="HOGENOM" id="CLU_090336_11_0_9"/>
<dbReference type="GO" id="GO:0005524">
    <property type="term" value="F:ATP binding"/>
    <property type="evidence" value="ECO:0007669"/>
    <property type="project" value="UniProtKB-KW"/>
</dbReference>
<dbReference type="GO" id="GO:0106310">
    <property type="term" value="F:protein serine kinase activity"/>
    <property type="evidence" value="ECO:0007669"/>
    <property type="project" value="RHEA"/>
</dbReference>
<dbReference type="GO" id="GO:0004674">
    <property type="term" value="F:protein serine/threonine kinase activity"/>
    <property type="evidence" value="ECO:0007669"/>
    <property type="project" value="UniProtKB-KW"/>
</dbReference>
<dbReference type="GO" id="GO:0016989">
    <property type="term" value="F:sigma factor antagonist activity"/>
    <property type="evidence" value="ECO:0007669"/>
    <property type="project" value="InterPro"/>
</dbReference>
<dbReference type="GO" id="GO:0030436">
    <property type="term" value="P:asexual sporulation"/>
    <property type="evidence" value="ECO:0007669"/>
    <property type="project" value="UniProtKB-UniRule"/>
</dbReference>
<dbReference type="GO" id="GO:0042174">
    <property type="term" value="P:negative regulation of sporulation resulting in formation of a cellular spore"/>
    <property type="evidence" value="ECO:0007669"/>
    <property type="project" value="InterPro"/>
</dbReference>
<dbReference type="GO" id="GO:0030435">
    <property type="term" value="P:sporulation resulting in formation of a cellular spore"/>
    <property type="evidence" value="ECO:0007669"/>
    <property type="project" value="UniProtKB-KW"/>
</dbReference>
<dbReference type="FunFam" id="3.30.565.10:FF:000022">
    <property type="entry name" value="Anti-sigma F factor"/>
    <property type="match status" value="1"/>
</dbReference>
<dbReference type="Gene3D" id="3.30.565.10">
    <property type="entry name" value="Histidine kinase-like ATPase, C-terminal domain"/>
    <property type="match status" value="1"/>
</dbReference>
<dbReference type="HAMAP" id="MF_00637">
    <property type="entry name" value="Anti_sigma_F"/>
    <property type="match status" value="1"/>
</dbReference>
<dbReference type="InterPro" id="IPR050267">
    <property type="entry name" value="Anti-sigma-factor_SerPK"/>
</dbReference>
<dbReference type="InterPro" id="IPR010194">
    <property type="entry name" value="Anti-sigma_F"/>
</dbReference>
<dbReference type="InterPro" id="IPR036890">
    <property type="entry name" value="HATPase_C_sf"/>
</dbReference>
<dbReference type="NCBIfam" id="TIGR01925">
    <property type="entry name" value="spIIAB"/>
    <property type="match status" value="1"/>
</dbReference>
<dbReference type="PANTHER" id="PTHR35526:SF3">
    <property type="entry name" value="ANTI-SIGMA-F FACTOR RSBW"/>
    <property type="match status" value="1"/>
</dbReference>
<dbReference type="PANTHER" id="PTHR35526">
    <property type="entry name" value="ANTI-SIGMA-F FACTOR RSBW-RELATED"/>
    <property type="match status" value="1"/>
</dbReference>
<dbReference type="Pfam" id="PF13581">
    <property type="entry name" value="HATPase_c_2"/>
    <property type="match status" value="1"/>
</dbReference>
<dbReference type="SMART" id="SM00387">
    <property type="entry name" value="HATPase_c"/>
    <property type="match status" value="1"/>
</dbReference>
<dbReference type="SUPFAM" id="SSF55874">
    <property type="entry name" value="ATPase domain of HSP90 chaperone/DNA topoisomerase II/histidine kinase"/>
    <property type="match status" value="1"/>
</dbReference>
<name>SP2AB_BACAA</name>
<comment type="function">
    <text evidence="1">Binds to sigma F and blocks its ability to form an RNA polymerase holoenzyme (E-sigma F). Phosphorylates SpoIIAA on a serine residue. This phosphorylation may enable SpoIIAA to act as an anti-anti-sigma factor that counteracts SpoIIAB and thus releases sigma F from inhibition.</text>
</comment>
<comment type="catalytic activity">
    <reaction evidence="1">
        <text>L-seryl-[protein] + ATP = O-phospho-L-seryl-[protein] + ADP + H(+)</text>
        <dbReference type="Rhea" id="RHEA:17989"/>
        <dbReference type="Rhea" id="RHEA-COMP:9863"/>
        <dbReference type="Rhea" id="RHEA-COMP:11604"/>
        <dbReference type="ChEBI" id="CHEBI:15378"/>
        <dbReference type="ChEBI" id="CHEBI:29999"/>
        <dbReference type="ChEBI" id="CHEBI:30616"/>
        <dbReference type="ChEBI" id="CHEBI:83421"/>
        <dbReference type="ChEBI" id="CHEBI:456216"/>
        <dbReference type="EC" id="2.7.11.1"/>
    </reaction>
</comment>
<comment type="catalytic activity">
    <reaction evidence="1">
        <text>L-threonyl-[protein] + ATP = O-phospho-L-threonyl-[protein] + ADP + H(+)</text>
        <dbReference type="Rhea" id="RHEA:46608"/>
        <dbReference type="Rhea" id="RHEA-COMP:11060"/>
        <dbReference type="Rhea" id="RHEA-COMP:11605"/>
        <dbReference type="ChEBI" id="CHEBI:15378"/>
        <dbReference type="ChEBI" id="CHEBI:30013"/>
        <dbReference type="ChEBI" id="CHEBI:30616"/>
        <dbReference type="ChEBI" id="CHEBI:61977"/>
        <dbReference type="ChEBI" id="CHEBI:456216"/>
        <dbReference type="EC" id="2.7.11.1"/>
    </reaction>
</comment>
<comment type="similarity">
    <text evidence="1">Belongs to the anti-sigma-factor family.</text>
</comment>
<reference key="1">
    <citation type="submission" date="2009-04" db="EMBL/GenBank/DDBJ databases">
        <title>Genome sequence of Bacillus anthracis A0248.</title>
        <authorList>
            <person name="Dodson R.J."/>
            <person name="Munk A.C."/>
            <person name="Bruce D."/>
            <person name="Detter C."/>
            <person name="Tapia R."/>
            <person name="Sutton G."/>
            <person name="Sims D."/>
            <person name="Brettin T."/>
        </authorList>
    </citation>
    <scope>NUCLEOTIDE SEQUENCE [LARGE SCALE GENOMIC DNA]</scope>
    <source>
        <strain>A0248</strain>
    </source>
</reference>